<protein>
    <recommendedName>
        <fullName>(RS)-norcoclaurine 6-O-methyltransferase</fullName>
        <ecNumber>2.1.1.128</ecNumber>
    </recommendedName>
    <alternativeName>
        <fullName>S-adenosyl-L-methionine:norcoclaurine 6-O-methyltransferase</fullName>
        <shortName>6-OMT</shortName>
    </alternativeName>
</protein>
<reference key="1">
    <citation type="journal article" date="2000" name="J. Biol. Chem.">
        <title>Molecular characterization of the S-adenosyl-L-methionine: 3'-hydroxy-N-methylcoclaurine 4'O-methyltransferase involved in isoquinoline alkaloid biosynthesis in Coptis japonica.</title>
        <authorList>
            <person name="Morishige T."/>
            <person name="Tsujita T."/>
            <person name="Yamada Y."/>
            <person name="Sato F."/>
        </authorList>
    </citation>
    <scope>NUCLEOTIDE SEQUENCE [MRNA]</scope>
</reference>
<reference key="2">
    <citation type="journal article" date="1994" name="Eur. J. Biochem.">
        <title>Purification and characterization of S-adenosyl-L-methionine: norcoclaurine 6-O-methyltransferase from cultured Coptis japonica cells.</title>
        <authorList>
            <person name="Sato F."/>
            <person name="Tsujita T."/>
            <person name="Katagiri Y."/>
            <person name="Yoshida S."/>
            <person name="Yamada Y."/>
        </authorList>
    </citation>
    <scope>PROTEIN SEQUENCE OF 88-103</scope>
    <scope>FUNCTION</scope>
    <scope>CATALYTIC ACTIVITY</scope>
    <scope>REACTION MECHANISM</scope>
</reference>
<organism>
    <name type="scientific">Coptis japonica</name>
    <name type="common">Japanese goldthread</name>
    <dbReference type="NCBI Taxonomy" id="3442"/>
    <lineage>
        <taxon>Eukaryota</taxon>
        <taxon>Viridiplantae</taxon>
        <taxon>Streptophyta</taxon>
        <taxon>Embryophyta</taxon>
        <taxon>Tracheophyta</taxon>
        <taxon>Spermatophyta</taxon>
        <taxon>Magnoliopsida</taxon>
        <taxon>Ranunculales</taxon>
        <taxon>Ranunculaceae</taxon>
        <taxon>Coptidoideae</taxon>
        <taxon>Coptis</taxon>
    </lineage>
</organism>
<comment type="function">
    <text evidence="2">Catalyzes the transfer of the S-methyl group of S-adenosyl-L-methionine (AdoMet) to the 6-hydroxyl group of norcoclaurine to form coclaurine.</text>
</comment>
<comment type="catalytic activity">
    <reaction evidence="2">
        <text>norcoclaurine + S-adenosyl-L-methionine = coclaurine + S-adenosyl-L-homocysteine + H(+)</text>
        <dbReference type="Rhea" id="RHEA:19941"/>
        <dbReference type="ChEBI" id="CHEBI:15378"/>
        <dbReference type="ChEBI" id="CHEBI:57856"/>
        <dbReference type="ChEBI" id="CHEBI:58481"/>
        <dbReference type="ChEBI" id="CHEBI:58482"/>
        <dbReference type="ChEBI" id="CHEBI:59789"/>
        <dbReference type="EC" id="2.1.1.128"/>
    </reaction>
</comment>
<comment type="pathway">
    <text>Alkaloid biosynthesis; (S)-reticuline biosynthesis; (S)-reticuline from (S)-norcoclaurine: step 1/4.</text>
</comment>
<comment type="subunit">
    <text>Homodimer.</text>
</comment>
<comment type="similarity">
    <text evidence="1">Belongs to the class I-like SAM-binding methyltransferase superfamily. Cation-independent O-methyltransferase family. COMT subfamily.</text>
</comment>
<proteinExistence type="evidence at protein level"/>
<feature type="chain" id="PRO_0000204433" description="(RS)-norcoclaurine 6-O-methyltransferase">
    <location>
        <begin position="1"/>
        <end position="347"/>
    </location>
</feature>
<feature type="active site" description="Proton acceptor" evidence="1">
    <location>
        <position position="253"/>
    </location>
</feature>
<feature type="binding site" evidence="1">
    <location>
        <position position="192"/>
    </location>
    <ligand>
        <name>S-adenosyl-L-methionine</name>
        <dbReference type="ChEBI" id="CHEBI:59789"/>
    </ligand>
</feature>
<feature type="binding site" evidence="1">
    <location>
        <position position="215"/>
    </location>
    <ligand>
        <name>S-adenosyl-L-methionine</name>
        <dbReference type="ChEBI" id="CHEBI:59789"/>
    </ligand>
</feature>
<feature type="binding site" evidence="1">
    <location>
        <position position="235"/>
    </location>
    <ligand>
        <name>S-adenosyl-L-methionine</name>
        <dbReference type="ChEBI" id="CHEBI:59789"/>
    </ligand>
</feature>
<feature type="binding site" evidence="1">
    <location>
        <position position="236"/>
    </location>
    <ligand>
        <name>S-adenosyl-L-methionine</name>
        <dbReference type="ChEBI" id="CHEBI:59789"/>
    </ligand>
</feature>
<feature type="binding site" evidence="1">
    <location>
        <position position="249"/>
    </location>
    <ligand>
        <name>S-adenosyl-L-methionine</name>
        <dbReference type="ChEBI" id="CHEBI:59789"/>
    </ligand>
</feature>
<evidence type="ECO:0000255" key="1">
    <source>
        <dbReference type="PROSITE-ProRule" id="PRU01020"/>
    </source>
</evidence>
<evidence type="ECO:0000269" key="2">
    <source>
    </source>
</evidence>
<keyword id="KW-0903">Direct protein sequencing</keyword>
<keyword id="KW-0489">Methyltransferase</keyword>
<keyword id="KW-0949">S-adenosyl-L-methionine</keyword>
<keyword id="KW-0808">Transferase</keyword>
<accession>Q9LEL6</accession>
<dbReference type="EC" id="2.1.1.128"/>
<dbReference type="EMBL" id="D29811">
    <property type="protein sequence ID" value="BAB08004.1"/>
    <property type="molecule type" value="mRNA"/>
</dbReference>
<dbReference type="SMR" id="Q9LEL6"/>
<dbReference type="KEGG" id="ag:BAB08004"/>
<dbReference type="BioCyc" id="MetaCyc:MONOMER-8423"/>
<dbReference type="BRENDA" id="2.1.1.128">
    <property type="organism ID" value="1610"/>
</dbReference>
<dbReference type="SABIO-RK" id="Q9LEL6"/>
<dbReference type="UniPathway" id="UPA00306">
    <property type="reaction ID" value="UER00441"/>
</dbReference>
<dbReference type="GO" id="GO:0030786">
    <property type="term" value="F:(RS)-norcoclaurine 6-O-methyltransferase activity"/>
    <property type="evidence" value="ECO:0007669"/>
    <property type="project" value="UniProtKB-EC"/>
</dbReference>
<dbReference type="GO" id="GO:0008171">
    <property type="term" value="F:O-methyltransferase activity"/>
    <property type="evidence" value="ECO:0007669"/>
    <property type="project" value="InterPro"/>
</dbReference>
<dbReference type="GO" id="GO:0046983">
    <property type="term" value="F:protein dimerization activity"/>
    <property type="evidence" value="ECO:0007669"/>
    <property type="project" value="InterPro"/>
</dbReference>
<dbReference type="GO" id="GO:0032259">
    <property type="term" value="P:methylation"/>
    <property type="evidence" value="ECO:0007669"/>
    <property type="project" value="UniProtKB-KW"/>
</dbReference>
<dbReference type="FunFam" id="3.40.50.150:FF:000057">
    <property type="entry name" value="O-methyltransferase ZRP4"/>
    <property type="match status" value="1"/>
</dbReference>
<dbReference type="Gene3D" id="3.40.50.150">
    <property type="entry name" value="Vaccinia Virus protein VP39"/>
    <property type="match status" value="1"/>
</dbReference>
<dbReference type="Gene3D" id="1.10.10.10">
    <property type="entry name" value="Winged helix-like DNA-binding domain superfamily/Winged helix DNA-binding domain"/>
    <property type="match status" value="1"/>
</dbReference>
<dbReference type="InterPro" id="IPR016461">
    <property type="entry name" value="COMT-like"/>
</dbReference>
<dbReference type="InterPro" id="IPR001077">
    <property type="entry name" value="O_MeTrfase_dom"/>
</dbReference>
<dbReference type="InterPro" id="IPR012967">
    <property type="entry name" value="Plant_O-MeTrfase_dimerisation"/>
</dbReference>
<dbReference type="InterPro" id="IPR029063">
    <property type="entry name" value="SAM-dependent_MTases_sf"/>
</dbReference>
<dbReference type="InterPro" id="IPR036388">
    <property type="entry name" value="WH-like_DNA-bd_sf"/>
</dbReference>
<dbReference type="InterPro" id="IPR036390">
    <property type="entry name" value="WH_DNA-bd_sf"/>
</dbReference>
<dbReference type="PANTHER" id="PTHR11746">
    <property type="entry name" value="O-METHYLTRANSFERASE"/>
    <property type="match status" value="1"/>
</dbReference>
<dbReference type="Pfam" id="PF08100">
    <property type="entry name" value="Dimerisation"/>
    <property type="match status" value="1"/>
</dbReference>
<dbReference type="Pfam" id="PF00891">
    <property type="entry name" value="Methyltransf_2"/>
    <property type="match status" value="1"/>
</dbReference>
<dbReference type="PIRSF" id="PIRSF005739">
    <property type="entry name" value="O-mtase"/>
    <property type="match status" value="1"/>
</dbReference>
<dbReference type="SUPFAM" id="SSF53335">
    <property type="entry name" value="S-adenosyl-L-methionine-dependent methyltransferases"/>
    <property type="match status" value="1"/>
</dbReference>
<dbReference type="SUPFAM" id="SSF46785">
    <property type="entry name" value="Winged helix' DNA-binding domain"/>
    <property type="match status" value="1"/>
</dbReference>
<dbReference type="PROSITE" id="PS51683">
    <property type="entry name" value="SAM_OMT_II"/>
    <property type="match status" value="1"/>
</dbReference>
<name>6OMT_COPJA</name>
<sequence>MEVKKDNLSSQAKLWNFIYGFAESLVLKCAVQLDLANIIHNSGTSMTLSELSSRLPSQPVNEDALYRVMRYLVHMKLFTKASIDGELRYGLAPPAKYLVKGWDKCMVGSILAITDKDFMAPWHYLKDGLSGESGTAFEKALGTNIWGYMAEHPEKNQLFNEAMANDSRLIMSALVKECGNIFNGITTLVDVGGGTGTAVRNIANAFPHIKCTVYDLPHVIADSPGYSEVHCVAGDMFKFIPKADAIMMKCILHDWDDKECIEILKRCKEAVPVKGGKVIIVDIVLNVQSEHPYTKMRLTLDLDMMLNTGGKERTEEEWKKLIHDAGYKGHKITQITAVQSVIEAYPY</sequence>